<evidence type="ECO:0000255" key="1">
    <source>
        <dbReference type="HAMAP-Rule" id="MF_00237"/>
    </source>
</evidence>
<evidence type="ECO:0000256" key="2">
    <source>
        <dbReference type="SAM" id="MobiDB-lite"/>
    </source>
</evidence>
<comment type="function">
    <text evidence="1">Part of the twin-arginine translocation (Tat) system that transports large folded proteins containing a characteristic twin-arginine motif in their signal peptide across membranes. Together with TatC, TatB is part of a receptor directly interacting with Tat signal peptides. TatB may form an oligomeric binding site that transiently accommodates folded Tat precursor proteins before their translocation.</text>
</comment>
<comment type="subunit">
    <text evidence="1">The Tat system comprises two distinct complexes: a TatABC complex, containing multiple copies of TatA, TatB and TatC subunits, and a separate TatA complex, containing only TatA subunits. Substrates initially bind to the TatABC complex, which probably triggers association of the separate TatA complex to form the active translocon.</text>
</comment>
<comment type="subcellular location">
    <subcellularLocation>
        <location evidence="1">Cell inner membrane</location>
        <topology evidence="1">Single-pass membrane protein</topology>
    </subcellularLocation>
</comment>
<comment type="similarity">
    <text evidence="1">Belongs to the TatB family.</text>
</comment>
<reference key="1">
    <citation type="journal article" date="2003" name="J. Bacteriol.">
        <title>Comparative analyses of the complete genome sequences of Pierce's disease and citrus variegated chlorosis strains of Xylella fastidiosa.</title>
        <authorList>
            <person name="Van Sluys M.A."/>
            <person name="de Oliveira M.C."/>
            <person name="Monteiro-Vitorello C.B."/>
            <person name="Miyaki C.Y."/>
            <person name="Furlan L.R."/>
            <person name="Camargo L.E.A."/>
            <person name="da Silva A.C.R."/>
            <person name="Moon D.H."/>
            <person name="Takita M.A."/>
            <person name="Lemos E.G.M."/>
            <person name="Machado M.A."/>
            <person name="Ferro M.I.T."/>
            <person name="da Silva F.R."/>
            <person name="Goldman M.H.S."/>
            <person name="Goldman G.H."/>
            <person name="Lemos M.V.F."/>
            <person name="El-Dorry H."/>
            <person name="Tsai S.M."/>
            <person name="Carrer H."/>
            <person name="Carraro D.M."/>
            <person name="de Oliveira R.C."/>
            <person name="Nunes L.R."/>
            <person name="Siqueira W.J."/>
            <person name="Coutinho L.L."/>
            <person name="Kimura E.T."/>
            <person name="Ferro E.S."/>
            <person name="Harakava R."/>
            <person name="Kuramae E.E."/>
            <person name="Marino C.L."/>
            <person name="Giglioti E."/>
            <person name="Abreu I.L."/>
            <person name="Alves L.M.C."/>
            <person name="do Amaral A.M."/>
            <person name="Baia G.S."/>
            <person name="Blanco S.R."/>
            <person name="Brito M.S."/>
            <person name="Cannavan F.S."/>
            <person name="Celestino A.V."/>
            <person name="da Cunha A.F."/>
            <person name="Fenille R.C."/>
            <person name="Ferro J.A."/>
            <person name="Formighieri E.F."/>
            <person name="Kishi L.T."/>
            <person name="Leoni S.G."/>
            <person name="Oliveira A.R."/>
            <person name="Rosa V.E. Jr."/>
            <person name="Sassaki F.T."/>
            <person name="Sena J.A.D."/>
            <person name="de Souza A.A."/>
            <person name="Truffi D."/>
            <person name="Tsukumo F."/>
            <person name="Yanai G.M."/>
            <person name="Zaros L.G."/>
            <person name="Civerolo E.L."/>
            <person name="Simpson A.J.G."/>
            <person name="Almeida N.F. Jr."/>
            <person name="Setubal J.C."/>
            <person name="Kitajima J.P."/>
        </authorList>
    </citation>
    <scope>NUCLEOTIDE SEQUENCE [LARGE SCALE GENOMIC DNA]</scope>
    <source>
        <strain>Temecula1 / ATCC 700964</strain>
    </source>
</reference>
<proteinExistence type="inferred from homology"/>
<sequence>MFDIGFSELLLIAVVALVVLGPERLPKAARFAGLLVRRARTQWESIKQELERELEAEALKRNLQNAQQVIHDAQAQLQSNQQDMDIQNSISILHEQTKRDIHPDHDTNTLEPSTAVHHVHVPPPSTSTHGNNGQEKSQ</sequence>
<keyword id="KW-0997">Cell inner membrane</keyword>
<keyword id="KW-1003">Cell membrane</keyword>
<keyword id="KW-0472">Membrane</keyword>
<keyword id="KW-0653">Protein transport</keyword>
<keyword id="KW-1185">Reference proteome</keyword>
<keyword id="KW-0811">Translocation</keyword>
<keyword id="KW-0812">Transmembrane</keyword>
<keyword id="KW-1133">Transmembrane helix</keyword>
<keyword id="KW-0813">Transport</keyword>
<protein>
    <recommendedName>
        <fullName evidence="1">Sec-independent protein translocase protein TatB</fullName>
    </recommendedName>
</protein>
<name>TATB_XYLFT</name>
<organism>
    <name type="scientific">Xylella fastidiosa (strain Temecula1 / ATCC 700964)</name>
    <dbReference type="NCBI Taxonomy" id="183190"/>
    <lineage>
        <taxon>Bacteria</taxon>
        <taxon>Pseudomonadati</taxon>
        <taxon>Pseudomonadota</taxon>
        <taxon>Gammaproteobacteria</taxon>
        <taxon>Lysobacterales</taxon>
        <taxon>Lysobacteraceae</taxon>
        <taxon>Xylella</taxon>
    </lineage>
</organism>
<feature type="chain" id="PRO_0000192680" description="Sec-independent protein translocase protein TatB">
    <location>
        <begin position="1"/>
        <end position="138"/>
    </location>
</feature>
<feature type="transmembrane region" description="Helical" evidence="1">
    <location>
        <begin position="1"/>
        <end position="21"/>
    </location>
</feature>
<feature type="region of interest" description="Disordered" evidence="2">
    <location>
        <begin position="116"/>
        <end position="138"/>
    </location>
</feature>
<feature type="compositionally biased region" description="Polar residues" evidence="2">
    <location>
        <begin position="126"/>
        <end position="138"/>
    </location>
</feature>
<dbReference type="EMBL" id="AE009442">
    <property type="protein sequence ID" value="AAO29421.1"/>
    <property type="molecule type" value="Genomic_DNA"/>
</dbReference>
<dbReference type="RefSeq" id="WP_004088772.1">
    <property type="nucleotide sequence ID" value="NC_004556.1"/>
</dbReference>
<dbReference type="SMR" id="Q87B79"/>
<dbReference type="KEGG" id="xft:PD_1579"/>
<dbReference type="HOGENOM" id="CLU_086034_1_1_6"/>
<dbReference type="Proteomes" id="UP000002516">
    <property type="component" value="Chromosome"/>
</dbReference>
<dbReference type="GO" id="GO:0033281">
    <property type="term" value="C:TAT protein transport complex"/>
    <property type="evidence" value="ECO:0007669"/>
    <property type="project" value="UniProtKB-UniRule"/>
</dbReference>
<dbReference type="GO" id="GO:0008320">
    <property type="term" value="F:protein transmembrane transporter activity"/>
    <property type="evidence" value="ECO:0007669"/>
    <property type="project" value="UniProtKB-UniRule"/>
</dbReference>
<dbReference type="GO" id="GO:0043953">
    <property type="term" value="P:protein transport by the Tat complex"/>
    <property type="evidence" value="ECO:0007669"/>
    <property type="project" value="UniProtKB-UniRule"/>
</dbReference>
<dbReference type="Gene3D" id="1.20.5.3310">
    <property type="match status" value="1"/>
</dbReference>
<dbReference type="HAMAP" id="MF_00237">
    <property type="entry name" value="TatB"/>
    <property type="match status" value="1"/>
</dbReference>
<dbReference type="InterPro" id="IPR003369">
    <property type="entry name" value="TatA/B/E"/>
</dbReference>
<dbReference type="InterPro" id="IPR018448">
    <property type="entry name" value="TatB"/>
</dbReference>
<dbReference type="NCBIfam" id="TIGR01410">
    <property type="entry name" value="tatB"/>
    <property type="match status" value="1"/>
</dbReference>
<dbReference type="PANTHER" id="PTHR33162">
    <property type="entry name" value="SEC-INDEPENDENT PROTEIN TRANSLOCASE PROTEIN TATA, CHLOROPLASTIC"/>
    <property type="match status" value="1"/>
</dbReference>
<dbReference type="PANTHER" id="PTHR33162:SF1">
    <property type="entry name" value="SEC-INDEPENDENT PROTEIN TRANSLOCASE PROTEIN TATA, CHLOROPLASTIC"/>
    <property type="match status" value="1"/>
</dbReference>
<dbReference type="Pfam" id="PF02416">
    <property type="entry name" value="TatA_B_E"/>
    <property type="match status" value="1"/>
</dbReference>
<dbReference type="PRINTS" id="PR01506">
    <property type="entry name" value="TATBPROTEIN"/>
</dbReference>
<accession>Q87B79</accession>
<gene>
    <name evidence="1" type="primary">tatB</name>
    <name type="ordered locus">PD_1579</name>
</gene>